<sequence length="526" mass="55860">MTLDNYNIFGDEYLFSMPLSPLPKVLGTFDGIQSAPTLTTPTLTPTTLRSIEETFFEMTNDAPYQAGFKPPPLAPLVNNNNNNNNNGNGNGNGNGNQQQQQVFDCGASVMPGSDTEESNGSWADGQMNEDQSISDTSSGATDSTSYQNGHMMGNSGGGNGGGTGGANNFSNVLAAAGRNTNTSNSATPARRGGGRRPNRSANMTPEEEEKRRIRRERNKQAAARCRKRRVDQTNELTEEVELLEKRGENLKKEMELLNETKNQLEYFLQAHRPTCQKVRADMLSVTTCNGLIGPPALLSAGSCGSGSSHHNNNSNSNDSSSGTITGLDATLNSTGRSNSPLDLKPVPIDEDLLLHIKDEPLDGALDSSSSLDQDGPPPHKRFALPNIATLMTPTGPAGSLQTPVSGTAPHGFGSFPTTISNISSIHNGPTLNSLNKMPKERPNTLAFQRPFGGQMQLSVSGRAPTQIQGVPIQTPSTGTFNFDSLMDGGTGLTPVSGPLIPNCTSQNKHPLELPTPTTEPSKLVSL</sequence>
<comment type="function">
    <text evidence="2">Developmentally regulated transcription factor AP-1 binds and recognizes the enhancer DNA sequence: 5'-TGA[CG]TCA-3'. May play a role in the function or determination of a particular subset of cells in the developing embryo. It is able to carry out its function either independently of or in conjunction with Jra (By similarity).</text>
</comment>
<comment type="subunit">
    <text evidence="1">Homodimer. Heterodimer with Jra. The kay-Jra heterodimer binds more stably to the AP-1 site than either of the two proteins alone (By similarity).</text>
</comment>
<comment type="subcellular location">
    <subcellularLocation>
        <location evidence="2 4">Nucleus</location>
    </subcellularLocation>
</comment>
<comment type="similarity">
    <text evidence="3">Belongs to the bZIP family. Fos subfamily.</text>
</comment>
<proteinExistence type="inferred from homology"/>
<accession>B4G652</accession>
<feature type="chain" id="PRO_0000377387" description="Transcription factor kayak">
    <location>
        <begin position="1"/>
        <end position="526"/>
    </location>
</feature>
<feature type="domain" description="bZIP" evidence="4">
    <location>
        <begin position="208"/>
        <end position="271"/>
    </location>
</feature>
<feature type="region of interest" description="Disordered" evidence="5">
    <location>
        <begin position="71"/>
        <end position="165"/>
    </location>
</feature>
<feature type="region of interest" description="Disordered" evidence="5">
    <location>
        <begin position="178"/>
        <end position="221"/>
    </location>
</feature>
<feature type="region of interest" description="Basic motif" evidence="4">
    <location>
        <begin position="210"/>
        <end position="229"/>
    </location>
</feature>
<feature type="region of interest" description="Leucine-zipper" evidence="4">
    <location>
        <begin position="236"/>
        <end position="264"/>
    </location>
</feature>
<feature type="region of interest" description="Disordered" evidence="5">
    <location>
        <begin position="301"/>
        <end position="345"/>
    </location>
</feature>
<feature type="region of interest" description="Disordered" evidence="5">
    <location>
        <begin position="504"/>
        <end position="526"/>
    </location>
</feature>
<feature type="compositionally biased region" description="Low complexity" evidence="5">
    <location>
        <begin position="78"/>
        <end position="87"/>
    </location>
</feature>
<feature type="compositionally biased region" description="Low complexity" evidence="5">
    <location>
        <begin position="133"/>
        <end position="153"/>
    </location>
</feature>
<feature type="compositionally biased region" description="Gly residues" evidence="5">
    <location>
        <begin position="154"/>
        <end position="165"/>
    </location>
</feature>
<feature type="compositionally biased region" description="Polar residues" evidence="5">
    <location>
        <begin position="178"/>
        <end position="187"/>
    </location>
</feature>
<feature type="compositionally biased region" description="Low complexity" evidence="5">
    <location>
        <begin position="301"/>
        <end position="322"/>
    </location>
</feature>
<feature type="compositionally biased region" description="Polar residues" evidence="5">
    <location>
        <begin position="330"/>
        <end position="340"/>
    </location>
</feature>
<feature type="modified residue" description="Phosphoserine" evidence="2">
    <location>
        <position position="339"/>
    </location>
</feature>
<protein>
    <recommendedName>
        <fullName evidence="2">Transcription factor kayak</fullName>
    </recommendedName>
</protein>
<reference evidence="6" key="1">
    <citation type="journal article" date="2007" name="Nature">
        <title>Evolution of genes and genomes on the Drosophila phylogeny.</title>
        <authorList>
            <consortium name="Drosophila 12 genomes consortium"/>
        </authorList>
    </citation>
    <scope>NUCLEOTIDE SEQUENCE [LARGE SCALE GENOMIC DNA]</scope>
    <source>
        <strain>MSH-3 / Tucson 14011-0111.49</strain>
    </source>
</reference>
<name>FOSL_DROPE</name>
<organism>
    <name type="scientific">Drosophila persimilis</name>
    <name type="common">Fruit fly</name>
    <dbReference type="NCBI Taxonomy" id="7234"/>
    <lineage>
        <taxon>Eukaryota</taxon>
        <taxon>Metazoa</taxon>
        <taxon>Ecdysozoa</taxon>
        <taxon>Arthropoda</taxon>
        <taxon>Hexapoda</taxon>
        <taxon>Insecta</taxon>
        <taxon>Pterygota</taxon>
        <taxon>Neoptera</taxon>
        <taxon>Endopterygota</taxon>
        <taxon>Diptera</taxon>
        <taxon>Brachycera</taxon>
        <taxon>Muscomorpha</taxon>
        <taxon>Ephydroidea</taxon>
        <taxon>Drosophilidae</taxon>
        <taxon>Drosophila</taxon>
        <taxon>Sophophora</taxon>
    </lineage>
</organism>
<dbReference type="EMBL" id="CH479179">
    <property type="protein sequence ID" value="EDW23811.1"/>
    <property type="molecule type" value="Genomic_DNA"/>
</dbReference>
<dbReference type="RefSeq" id="XP_002012825.1">
    <property type="nucleotide sequence ID" value="XM_002012789.1"/>
</dbReference>
<dbReference type="SMR" id="B4G652"/>
<dbReference type="STRING" id="7234.B4G652"/>
<dbReference type="EnsemblMetazoa" id="FBtr0189336">
    <property type="protein sequence ID" value="FBpp0187828"/>
    <property type="gene ID" value="FBgn0161311"/>
</dbReference>
<dbReference type="eggNOG" id="KOG1414">
    <property type="taxonomic scope" value="Eukaryota"/>
</dbReference>
<dbReference type="HOGENOM" id="CLU_020183_0_0_1"/>
<dbReference type="OMA" id="HQSLHFA"/>
<dbReference type="OrthoDB" id="5866312at2759"/>
<dbReference type="PhylomeDB" id="B4G652"/>
<dbReference type="ChiTaRS" id="kay">
    <property type="organism name" value="fly"/>
</dbReference>
<dbReference type="Proteomes" id="UP000008744">
    <property type="component" value="Unassembled WGS sequence"/>
</dbReference>
<dbReference type="GO" id="GO:0005634">
    <property type="term" value="C:nucleus"/>
    <property type="evidence" value="ECO:0000250"/>
    <property type="project" value="UniProtKB"/>
</dbReference>
<dbReference type="GO" id="GO:0003677">
    <property type="term" value="F:DNA binding"/>
    <property type="evidence" value="ECO:0000250"/>
    <property type="project" value="UniProtKB"/>
</dbReference>
<dbReference type="GO" id="GO:0000981">
    <property type="term" value="F:DNA-binding transcription factor activity, RNA polymerase II-specific"/>
    <property type="evidence" value="ECO:0007669"/>
    <property type="project" value="TreeGrafter"/>
</dbReference>
<dbReference type="GO" id="GO:0000978">
    <property type="term" value="F:RNA polymerase II cis-regulatory region sequence-specific DNA binding"/>
    <property type="evidence" value="ECO:0007669"/>
    <property type="project" value="TreeGrafter"/>
</dbReference>
<dbReference type="GO" id="GO:0009792">
    <property type="term" value="P:embryo development ending in birth or egg hatching"/>
    <property type="evidence" value="ECO:0000250"/>
    <property type="project" value="UniProtKB"/>
</dbReference>
<dbReference type="FunFam" id="1.20.5.170:FF:000006">
    <property type="entry name" value="fos-related antigen 2 isoform X1"/>
    <property type="match status" value="1"/>
</dbReference>
<dbReference type="Gene3D" id="1.20.5.170">
    <property type="match status" value="1"/>
</dbReference>
<dbReference type="InterPro" id="IPR000837">
    <property type="entry name" value="AP-1"/>
</dbReference>
<dbReference type="InterPro" id="IPR004827">
    <property type="entry name" value="bZIP"/>
</dbReference>
<dbReference type="InterPro" id="IPR046347">
    <property type="entry name" value="bZIP_sf"/>
</dbReference>
<dbReference type="PANTHER" id="PTHR23351:SF24">
    <property type="entry name" value="ACTIVATING TRANSCRIPTION FACTOR 3-RELATED"/>
    <property type="match status" value="1"/>
</dbReference>
<dbReference type="PANTHER" id="PTHR23351">
    <property type="entry name" value="FOS TRANSCRIPTION FACTOR-RELATED"/>
    <property type="match status" value="1"/>
</dbReference>
<dbReference type="Pfam" id="PF00170">
    <property type="entry name" value="bZIP_1"/>
    <property type="match status" value="1"/>
</dbReference>
<dbReference type="PRINTS" id="PR00042">
    <property type="entry name" value="LEUZIPPRFOS"/>
</dbReference>
<dbReference type="SMART" id="SM00338">
    <property type="entry name" value="BRLZ"/>
    <property type="match status" value="1"/>
</dbReference>
<dbReference type="SUPFAM" id="SSF57959">
    <property type="entry name" value="Leucine zipper domain"/>
    <property type="match status" value="1"/>
</dbReference>
<dbReference type="PROSITE" id="PS50217">
    <property type="entry name" value="BZIP"/>
    <property type="match status" value="1"/>
</dbReference>
<dbReference type="PROSITE" id="PS00036">
    <property type="entry name" value="BZIP_BASIC"/>
    <property type="match status" value="1"/>
</dbReference>
<keyword id="KW-0010">Activator</keyword>
<keyword id="KW-0238">DNA-binding</keyword>
<keyword id="KW-0539">Nucleus</keyword>
<keyword id="KW-0597">Phosphoprotein</keyword>
<keyword id="KW-1185">Reference proteome</keyword>
<keyword id="KW-0804">Transcription</keyword>
<keyword id="KW-0805">Transcription regulation</keyword>
<evidence type="ECO:0000250" key="1"/>
<evidence type="ECO:0000250" key="2">
    <source>
        <dbReference type="UniProtKB" id="P21525"/>
    </source>
</evidence>
<evidence type="ECO:0000255" key="3"/>
<evidence type="ECO:0000255" key="4">
    <source>
        <dbReference type="PROSITE-ProRule" id="PRU00978"/>
    </source>
</evidence>
<evidence type="ECO:0000256" key="5">
    <source>
        <dbReference type="SAM" id="MobiDB-lite"/>
    </source>
</evidence>
<evidence type="ECO:0000312" key="6">
    <source>
        <dbReference type="EMBL" id="EDW23811.1"/>
    </source>
</evidence>
<gene>
    <name evidence="2" type="primary">kay</name>
    <name type="ORF">GL23721</name>
</gene>